<reference key="1">
    <citation type="journal article" date="1987" name="J. Bacteriol.">
        <title>Yeast plasmids resembling 2 micron DNA: regional similarities and diversities at the molecular level.</title>
        <authorList>
            <person name="Utatsu I."/>
            <person name="Sakamoto S."/>
            <person name="Imura T."/>
            <person name="Toh-e A."/>
        </authorList>
    </citation>
    <scope>NUCLEOTIDE SEQUENCE [GENOMIC DNA]</scope>
    <source>
        <strain>NBRC 0021</strain>
    </source>
</reference>
<comment type="function">
    <text>Plasmid partition require REP1, REP2, and a cis-acting DNA sequence (known as STB).</text>
</comment>
<dbReference type="EMBL" id="M18275">
    <property type="protein sequence ID" value="AAA35278.1"/>
    <property type="molecule type" value="Genomic_DNA"/>
</dbReference>
<dbReference type="RefSeq" id="NP_040494.1">
    <property type="nucleotide sequence ID" value="NC_002054.1"/>
</dbReference>
<dbReference type="SMR" id="P13742"/>
<dbReference type="GO" id="GO:0030541">
    <property type="term" value="P:plasmid partitioning"/>
    <property type="evidence" value="ECO:0007669"/>
    <property type="project" value="UniProtKB-KW"/>
</dbReference>
<keyword id="KW-0614">Plasmid</keyword>
<keyword id="KW-0616">Plasmid partition</keyword>
<feature type="chain" id="PRO_0000150902" description="Trans-acting factor C">
    <location>
        <begin position="1"/>
        <end position="200"/>
    </location>
</feature>
<feature type="region of interest" description="Disordered" evidence="1">
    <location>
        <begin position="37"/>
        <end position="58"/>
    </location>
</feature>
<feature type="compositionally biased region" description="Low complexity" evidence="1">
    <location>
        <begin position="37"/>
        <end position="53"/>
    </location>
</feature>
<name>REP2_LACFM</name>
<accession>P13742</accession>
<geneLocation type="plasmid">
    <name>pSM1</name>
</geneLocation>
<evidence type="ECO:0000256" key="1">
    <source>
        <dbReference type="SAM" id="MobiDB-lite"/>
    </source>
</evidence>
<organism>
    <name type="scientific">Lachancea fermentati</name>
    <name type="common">Zygosaccharomyces fermentati</name>
    <dbReference type="NCBI Taxonomy" id="4955"/>
    <lineage>
        <taxon>Eukaryota</taxon>
        <taxon>Fungi</taxon>
        <taxon>Dikarya</taxon>
        <taxon>Ascomycota</taxon>
        <taxon>Saccharomycotina</taxon>
        <taxon>Saccharomycetes</taxon>
        <taxon>Saccharomycetales</taxon>
        <taxon>Saccharomycetaceae</taxon>
        <taxon>Lachancea</taxon>
    </lineage>
</organism>
<sequence>MEANPGELERFGKAIRKIWLYETIMLGAEKIAKGNLSEESTSTSESEIPNTSSQQDVISSSEHVSDSLKFWEVLNFLEVSWVPHSGEDGVQHKLSQYVEKDPSTFEELKKRRLAAKNDVYGYVRQIMYSKGQVRIYRGVRCKPNGVLKVSLFYGPCKWVTSMWVTLVPITLRENGSLEDIEFTFNCSLNLKSSKAISAGM</sequence>
<proteinExistence type="predicted"/>
<gene>
    <name type="primary">C</name>
</gene>
<protein>
    <recommendedName>
        <fullName>Trans-acting factor C</fullName>
    </recommendedName>
    <alternativeName>
        <fullName>REP2</fullName>
    </alternativeName>
</protein>